<sequence>MQAEKLAYYPFISEASAHVGDLGISLESLLNSRAYRTARARGIERVKEALEGEIKKPPVSEEAQVLSELLSYPFARMLVACVDDQLFTRRYALAEAKAAYTFLRNETPDFLLEFGEDFGISAEIRDSHFSMHFTDYIRFSNSLKEPSWKLTNRQFRAGKIKITKEEFARLLEEAVRERIEQSFPIPEIPPEVSAFCAPYVAEIKEQFEVQKKKFGATDFGAVEPELFPPCISHALANVQGGVNLAHSMRFAMTSFLLNVGMSVEEILNLFNVSPDFDAEKTLYQIEHIAGATGNEYKPPACDTMRTYGNCIGKDGLCAKISHPLGYYERRIFLKNKEREKEEGKEKGNEEKKEKREEHEKKNEKGNEIKEK</sequence>
<proteinExistence type="inferred from homology"/>
<comment type="function">
    <text evidence="1">Regulatory subunit of DNA primase, an RNA polymerase that catalyzes the synthesis of short RNA molecules used as primers for DNA polymerase during DNA replication. Stabilizes and modulates the activity of the small subunit, increasing the rate of DNA synthesis, and conferring RNA synthesis capability. The DNA polymerase activity may enable DNA primase to also catalyze primer extension after primer synthesis. May also play a role in DNA repair.</text>
</comment>
<comment type="cofactor">
    <cofactor evidence="1">
        <name>[4Fe-4S] cluster</name>
        <dbReference type="ChEBI" id="CHEBI:49883"/>
    </cofactor>
    <text evidence="1">Binds 1 [4Fe-4S] cluster.</text>
</comment>
<comment type="subunit">
    <text evidence="1">Heterodimer of a small subunit (PriS) and a large subunit (PriL).</text>
</comment>
<comment type="similarity">
    <text evidence="1">Belongs to the eukaryotic-type primase large subunit family.</text>
</comment>
<evidence type="ECO:0000255" key="1">
    <source>
        <dbReference type="HAMAP-Rule" id="MF_00701"/>
    </source>
</evidence>
<evidence type="ECO:0000256" key="2">
    <source>
        <dbReference type="SAM" id="MobiDB-lite"/>
    </source>
</evidence>
<accession>Q8TUF8</accession>
<keyword id="KW-0004">4Fe-4S</keyword>
<keyword id="KW-0235">DNA replication</keyword>
<keyword id="KW-0408">Iron</keyword>
<keyword id="KW-0411">Iron-sulfur</keyword>
<keyword id="KW-0479">Metal-binding</keyword>
<keyword id="KW-0639">Primosome</keyword>
<keyword id="KW-1185">Reference proteome</keyword>
<name>PRIL_METAC</name>
<dbReference type="EMBL" id="AE010299">
    <property type="protein sequence ID" value="AAM03563.1"/>
    <property type="molecule type" value="Genomic_DNA"/>
</dbReference>
<dbReference type="RefSeq" id="WP_011020168.1">
    <property type="nucleotide sequence ID" value="NC_003552.1"/>
</dbReference>
<dbReference type="STRING" id="188937.MA_0109"/>
<dbReference type="EnsemblBacteria" id="AAM03563">
    <property type="protein sequence ID" value="AAM03563"/>
    <property type="gene ID" value="MA_0109"/>
</dbReference>
<dbReference type="GeneID" id="1472001"/>
<dbReference type="KEGG" id="mac:MA_0109"/>
<dbReference type="HOGENOM" id="CLU_052778_0_0_2"/>
<dbReference type="InParanoid" id="Q8TUF8"/>
<dbReference type="OrthoDB" id="46081at2157"/>
<dbReference type="PhylomeDB" id="Q8TUF8"/>
<dbReference type="Proteomes" id="UP000002487">
    <property type="component" value="Chromosome"/>
</dbReference>
<dbReference type="GO" id="GO:1990077">
    <property type="term" value="C:primosome complex"/>
    <property type="evidence" value="ECO:0007669"/>
    <property type="project" value="UniProtKB-KW"/>
</dbReference>
<dbReference type="GO" id="GO:0051539">
    <property type="term" value="F:4 iron, 4 sulfur cluster binding"/>
    <property type="evidence" value="ECO:0007669"/>
    <property type="project" value="UniProtKB-UniRule"/>
</dbReference>
<dbReference type="GO" id="GO:0003899">
    <property type="term" value="F:DNA-directed RNA polymerase activity"/>
    <property type="evidence" value="ECO:0007669"/>
    <property type="project" value="InterPro"/>
</dbReference>
<dbReference type="GO" id="GO:0046872">
    <property type="term" value="F:metal ion binding"/>
    <property type="evidence" value="ECO:0007669"/>
    <property type="project" value="UniProtKB-KW"/>
</dbReference>
<dbReference type="GO" id="GO:0006270">
    <property type="term" value="P:DNA replication initiation"/>
    <property type="evidence" value="ECO:0000318"/>
    <property type="project" value="GO_Central"/>
</dbReference>
<dbReference type="GO" id="GO:0006269">
    <property type="term" value="P:DNA replication, synthesis of primer"/>
    <property type="evidence" value="ECO:0000318"/>
    <property type="project" value="GO_Central"/>
</dbReference>
<dbReference type="CDD" id="cd06560">
    <property type="entry name" value="PriL"/>
    <property type="match status" value="1"/>
</dbReference>
<dbReference type="HAMAP" id="MF_00701">
    <property type="entry name" value="DNA_primase_lrg_arc"/>
    <property type="match status" value="1"/>
</dbReference>
<dbReference type="InterPro" id="IPR007238">
    <property type="entry name" value="DNA_primase_lsu_euk/arc"/>
</dbReference>
<dbReference type="InterPro" id="IPR023642">
    <property type="entry name" value="DNA_primase_lsu_PriL"/>
</dbReference>
<dbReference type="NCBIfam" id="NF002588">
    <property type="entry name" value="PRK02249.1-2"/>
    <property type="match status" value="1"/>
</dbReference>
<dbReference type="PANTHER" id="PTHR10537">
    <property type="entry name" value="DNA PRIMASE LARGE SUBUNIT"/>
    <property type="match status" value="1"/>
</dbReference>
<dbReference type="PANTHER" id="PTHR10537:SF3">
    <property type="entry name" value="DNA PRIMASE LARGE SUBUNIT"/>
    <property type="match status" value="1"/>
</dbReference>
<dbReference type="Pfam" id="PF04104">
    <property type="entry name" value="DNA_primase_lrg"/>
    <property type="match status" value="1"/>
</dbReference>
<dbReference type="SUPFAM" id="SSF140914">
    <property type="entry name" value="PriB N-terminal domain-like"/>
    <property type="match status" value="1"/>
</dbReference>
<reference key="1">
    <citation type="journal article" date="2002" name="Genome Res.">
        <title>The genome of Methanosarcina acetivorans reveals extensive metabolic and physiological diversity.</title>
        <authorList>
            <person name="Galagan J.E."/>
            <person name="Nusbaum C."/>
            <person name="Roy A."/>
            <person name="Endrizzi M.G."/>
            <person name="Macdonald P."/>
            <person name="FitzHugh W."/>
            <person name="Calvo S."/>
            <person name="Engels R."/>
            <person name="Smirnov S."/>
            <person name="Atnoor D."/>
            <person name="Brown A."/>
            <person name="Allen N."/>
            <person name="Naylor J."/>
            <person name="Stange-Thomann N."/>
            <person name="DeArellano K."/>
            <person name="Johnson R."/>
            <person name="Linton L."/>
            <person name="McEwan P."/>
            <person name="McKernan K."/>
            <person name="Talamas J."/>
            <person name="Tirrell A."/>
            <person name="Ye W."/>
            <person name="Zimmer A."/>
            <person name="Barber R.D."/>
            <person name="Cann I."/>
            <person name="Graham D.E."/>
            <person name="Grahame D.A."/>
            <person name="Guss A.M."/>
            <person name="Hedderich R."/>
            <person name="Ingram-Smith C."/>
            <person name="Kuettner H.C."/>
            <person name="Krzycki J.A."/>
            <person name="Leigh J.A."/>
            <person name="Li W."/>
            <person name="Liu J."/>
            <person name="Mukhopadhyay B."/>
            <person name="Reeve J.N."/>
            <person name="Smith K."/>
            <person name="Springer T.A."/>
            <person name="Umayam L.A."/>
            <person name="White O."/>
            <person name="White R.H."/>
            <person name="de Macario E.C."/>
            <person name="Ferry J.G."/>
            <person name="Jarrell K.F."/>
            <person name="Jing H."/>
            <person name="Macario A.J.L."/>
            <person name="Paulsen I.T."/>
            <person name="Pritchett M."/>
            <person name="Sowers K.R."/>
            <person name="Swanson R.V."/>
            <person name="Zinder S.H."/>
            <person name="Lander E."/>
            <person name="Metcalf W.W."/>
            <person name="Birren B."/>
        </authorList>
    </citation>
    <scope>NUCLEOTIDE SEQUENCE [LARGE SCALE GENOMIC DNA]</scope>
    <source>
        <strain>ATCC 35395 / DSM 2834 / JCM 12185 / C2A</strain>
    </source>
</reference>
<feature type="chain" id="PRO_0000046780" description="DNA primase large subunit PriL">
    <location>
        <begin position="1"/>
        <end position="371"/>
    </location>
</feature>
<feature type="region of interest" description="Disordered" evidence="2">
    <location>
        <begin position="337"/>
        <end position="371"/>
    </location>
</feature>
<feature type="binding site" evidence="1">
    <location>
        <position position="230"/>
    </location>
    <ligand>
        <name>[4Fe-4S] cluster</name>
        <dbReference type="ChEBI" id="CHEBI:49883"/>
    </ligand>
</feature>
<feature type="binding site" evidence="1">
    <location>
        <position position="301"/>
    </location>
    <ligand>
        <name>[4Fe-4S] cluster</name>
        <dbReference type="ChEBI" id="CHEBI:49883"/>
    </ligand>
</feature>
<feature type="binding site" evidence="1">
    <location>
        <position position="310"/>
    </location>
    <ligand>
        <name>[4Fe-4S] cluster</name>
        <dbReference type="ChEBI" id="CHEBI:49883"/>
    </ligand>
</feature>
<feature type="binding site" evidence="1">
    <location>
        <position position="317"/>
    </location>
    <ligand>
        <name>[4Fe-4S] cluster</name>
        <dbReference type="ChEBI" id="CHEBI:49883"/>
    </ligand>
</feature>
<organism>
    <name type="scientific">Methanosarcina acetivorans (strain ATCC 35395 / DSM 2834 / JCM 12185 / C2A)</name>
    <dbReference type="NCBI Taxonomy" id="188937"/>
    <lineage>
        <taxon>Archaea</taxon>
        <taxon>Methanobacteriati</taxon>
        <taxon>Methanobacteriota</taxon>
        <taxon>Stenosarchaea group</taxon>
        <taxon>Methanomicrobia</taxon>
        <taxon>Methanosarcinales</taxon>
        <taxon>Methanosarcinaceae</taxon>
        <taxon>Methanosarcina</taxon>
    </lineage>
</organism>
<protein>
    <recommendedName>
        <fullName evidence="1">DNA primase large subunit PriL</fullName>
    </recommendedName>
</protein>
<gene>
    <name evidence="1" type="primary">priL</name>
    <name type="synonym">priB</name>
    <name type="ordered locus">MA_0109</name>
</gene>